<organism>
    <name type="scientific">Escherichia coli O157:H7</name>
    <dbReference type="NCBI Taxonomy" id="83334"/>
    <lineage>
        <taxon>Bacteria</taxon>
        <taxon>Pseudomonadati</taxon>
        <taxon>Pseudomonadota</taxon>
        <taxon>Gammaproteobacteria</taxon>
        <taxon>Enterobacterales</taxon>
        <taxon>Enterobacteriaceae</taxon>
        <taxon>Escherichia</taxon>
    </lineage>
</organism>
<reference key="1">
    <citation type="journal article" date="2001" name="Nature">
        <title>Genome sequence of enterohaemorrhagic Escherichia coli O157:H7.</title>
        <authorList>
            <person name="Perna N.T."/>
            <person name="Plunkett G. III"/>
            <person name="Burland V."/>
            <person name="Mau B."/>
            <person name="Glasner J.D."/>
            <person name="Rose D.J."/>
            <person name="Mayhew G.F."/>
            <person name="Evans P.S."/>
            <person name="Gregor J."/>
            <person name="Kirkpatrick H.A."/>
            <person name="Posfai G."/>
            <person name="Hackett J."/>
            <person name="Klink S."/>
            <person name="Boutin A."/>
            <person name="Shao Y."/>
            <person name="Miller L."/>
            <person name="Grotbeck E.J."/>
            <person name="Davis N.W."/>
            <person name="Lim A."/>
            <person name="Dimalanta E.T."/>
            <person name="Potamousis K."/>
            <person name="Apodaca J."/>
            <person name="Anantharaman T.S."/>
            <person name="Lin J."/>
            <person name="Yen G."/>
            <person name="Schwartz D.C."/>
            <person name="Welch R.A."/>
            <person name="Blattner F.R."/>
        </authorList>
    </citation>
    <scope>NUCLEOTIDE SEQUENCE [LARGE SCALE GENOMIC DNA]</scope>
    <source>
        <strain>O157:H7 / EDL933 / ATCC 700927 / EHEC</strain>
    </source>
</reference>
<reference key="2">
    <citation type="journal article" date="2001" name="DNA Res.">
        <title>Complete genome sequence of enterohemorrhagic Escherichia coli O157:H7 and genomic comparison with a laboratory strain K-12.</title>
        <authorList>
            <person name="Hayashi T."/>
            <person name="Makino K."/>
            <person name="Ohnishi M."/>
            <person name="Kurokawa K."/>
            <person name="Ishii K."/>
            <person name="Yokoyama K."/>
            <person name="Han C.-G."/>
            <person name="Ohtsubo E."/>
            <person name="Nakayama K."/>
            <person name="Murata T."/>
            <person name="Tanaka M."/>
            <person name="Tobe T."/>
            <person name="Iida T."/>
            <person name="Takami H."/>
            <person name="Honda T."/>
            <person name="Sasakawa C."/>
            <person name="Ogasawara N."/>
            <person name="Yasunaga T."/>
            <person name="Kuhara S."/>
            <person name="Shiba T."/>
            <person name="Hattori M."/>
            <person name="Shinagawa H."/>
        </authorList>
    </citation>
    <scope>NUCLEOTIDE SEQUENCE [LARGE SCALE GENOMIC DNA]</scope>
    <source>
        <strain>O157:H7 / Sakai / RIMD 0509952 / EHEC</strain>
    </source>
</reference>
<proteinExistence type="inferred from homology"/>
<dbReference type="EC" id="2.8.1.-"/>
<dbReference type="EMBL" id="AE005174">
    <property type="protein sequence ID" value="AAG55455.1"/>
    <property type="status" value="ALT_INIT"/>
    <property type="molecule type" value="Genomic_DNA"/>
</dbReference>
<dbReference type="EMBL" id="BA000007">
    <property type="protein sequence ID" value="BAB34476.2"/>
    <property type="molecule type" value="Genomic_DNA"/>
</dbReference>
<dbReference type="PIR" id="C85624">
    <property type="entry name" value="C85624"/>
</dbReference>
<dbReference type="PIR" id="E90760">
    <property type="entry name" value="E90760"/>
</dbReference>
<dbReference type="RefSeq" id="NP_309080.2">
    <property type="nucleotide sequence ID" value="NC_002695.1"/>
</dbReference>
<dbReference type="RefSeq" id="WP_000904442.1">
    <property type="nucleotide sequence ID" value="NZ_VOAI01000006.1"/>
</dbReference>
<dbReference type="SMR" id="Q8XD82"/>
<dbReference type="STRING" id="155864.Z1321"/>
<dbReference type="GeneID" id="912999"/>
<dbReference type="GeneID" id="93776445"/>
<dbReference type="KEGG" id="ece:Z1321"/>
<dbReference type="KEGG" id="ecs:ECs_1053"/>
<dbReference type="PATRIC" id="fig|386585.9.peg.1178"/>
<dbReference type="eggNOG" id="COG2920">
    <property type="taxonomic scope" value="Bacteria"/>
</dbReference>
<dbReference type="HOGENOM" id="CLU_153199_0_0_6"/>
<dbReference type="OMA" id="LPKPTNC"/>
<dbReference type="Proteomes" id="UP000000558">
    <property type="component" value="Chromosome"/>
</dbReference>
<dbReference type="Proteomes" id="UP000002519">
    <property type="component" value="Chromosome"/>
</dbReference>
<dbReference type="GO" id="GO:0005737">
    <property type="term" value="C:cytoplasm"/>
    <property type="evidence" value="ECO:0007669"/>
    <property type="project" value="UniProtKB-SubCell"/>
</dbReference>
<dbReference type="GO" id="GO:0097163">
    <property type="term" value="F:sulfur carrier activity"/>
    <property type="evidence" value="ECO:0007669"/>
    <property type="project" value="TreeGrafter"/>
</dbReference>
<dbReference type="GO" id="GO:0016740">
    <property type="term" value="F:transferase activity"/>
    <property type="evidence" value="ECO:0007669"/>
    <property type="project" value="UniProtKB-KW"/>
</dbReference>
<dbReference type="GO" id="GO:0002143">
    <property type="term" value="P:tRNA wobble position uridine thiolation"/>
    <property type="evidence" value="ECO:0007669"/>
    <property type="project" value="TreeGrafter"/>
</dbReference>
<dbReference type="FunFam" id="1.10.10.370:FF:000001">
    <property type="entry name" value="Sulfurtransferase"/>
    <property type="match status" value="1"/>
</dbReference>
<dbReference type="FunFam" id="3.30.1420.10:FF:000001">
    <property type="entry name" value="Sulfurtransferase"/>
    <property type="match status" value="1"/>
</dbReference>
<dbReference type="Gene3D" id="3.30.1420.10">
    <property type="match status" value="1"/>
</dbReference>
<dbReference type="Gene3D" id="1.10.10.370">
    <property type="entry name" value="DsrC-like protein, C-terminal domain"/>
    <property type="match status" value="1"/>
</dbReference>
<dbReference type="InterPro" id="IPR042072">
    <property type="entry name" value="DsrC-like_C"/>
</dbReference>
<dbReference type="InterPro" id="IPR025526">
    <property type="entry name" value="DsrC-like_dom_sf"/>
</dbReference>
<dbReference type="InterPro" id="IPR043163">
    <property type="entry name" value="DsrC-like_N"/>
</dbReference>
<dbReference type="InterPro" id="IPR007453">
    <property type="entry name" value="DsrC/TusE"/>
</dbReference>
<dbReference type="NCBIfam" id="TIGR03342">
    <property type="entry name" value="dsrC_tusE_dsvC"/>
    <property type="match status" value="1"/>
</dbReference>
<dbReference type="NCBIfam" id="NF008562">
    <property type="entry name" value="PRK11508.1"/>
    <property type="match status" value="1"/>
</dbReference>
<dbReference type="PANTHER" id="PTHR37010">
    <property type="entry name" value="SULFURTRANSFERASE TUSE"/>
    <property type="match status" value="1"/>
</dbReference>
<dbReference type="PANTHER" id="PTHR37010:SF1">
    <property type="entry name" value="SULFURTRANSFERASE TUSE"/>
    <property type="match status" value="1"/>
</dbReference>
<dbReference type="Pfam" id="PF04358">
    <property type="entry name" value="DsrC"/>
    <property type="match status" value="1"/>
</dbReference>
<dbReference type="PIRSF" id="PIRSF006223">
    <property type="entry name" value="DsrC_TusE"/>
    <property type="match status" value="1"/>
</dbReference>
<dbReference type="SUPFAM" id="SSF69721">
    <property type="entry name" value="DsrC, the gamma subunit of dissimilatory sulfite reductase"/>
    <property type="match status" value="1"/>
</dbReference>
<protein>
    <recommendedName>
        <fullName>Sulfurtransferase TusE</fullName>
        <ecNumber>2.8.1.-</ecNumber>
    </recommendedName>
    <alternativeName>
        <fullName>tRNA 2-thiouridine synthesizing protein E</fullName>
    </alternativeName>
</protein>
<name>TUSE_ECO57</name>
<feature type="chain" id="PRO_0000234610" description="Sulfurtransferase TusE">
    <location>
        <begin position="1"/>
        <end position="109"/>
    </location>
</feature>
<feature type="active site" description="Cysteine persulfide intermediate" evidence="1">
    <location>
        <position position="108"/>
    </location>
</feature>
<sequence length="109" mass="12410">MLIFEGKEIETDTEGYLKESSQWSEPLAVVIAENEGISLSPEHWEVVRFVRDFYLEFNTSPAIRMLVKAMANKFGEEKGNSRYLYRLFPKGPAKQATKIAGLPKPVKCI</sequence>
<accession>Q8XD82</accession>
<accession>Q7AG22</accession>
<gene>
    <name type="primary">tusE</name>
    <name type="ordered locus">Z1321</name>
    <name type="ordered locus">ECs1053</name>
</gene>
<evidence type="ECO:0000250" key="1"/>
<evidence type="ECO:0000250" key="2">
    <source>
        <dbReference type="UniProtKB" id="P0AB18"/>
    </source>
</evidence>
<evidence type="ECO:0000305" key="3"/>
<keyword id="KW-0963">Cytoplasm</keyword>
<keyword id="KW-1185">Reference proteome</keyword>
<keyword id="KW-0808">Transferase</keyword>
<keyword id="KW-0819">tRNA processing</keyword>
<comment type="function">
    <text evidence="2">Part of a sulfur-relay system required for 2-thiolation of 5-methylaminomethyl-2-thiouridine (mnm(5)s(2)U) at tRNA wobble positions. Could accept sulfur from TusD.</text>
</comment>
<comment type="subunit">
    <text evidence="2">Interacts with the TusBCD complex. Interacts with MnmA.</text>
</comment>
<comment type="subcellular location">
    <subcellularLocation>
        <location evidence="2">Cytoplasm</location>
    </subcellularLocation>
</comment>
<comment type="similarity">
    <text evidence="3">Belongs to the DsrC/TusE family.</text>
</comment>
<comment type="sequence caution" evidence="3">
    <conflict type="erroneous initiation">
        <sequence resource="EMBL-CDS" id="AAG55455"/>
    </conflict>
    <text>Extended N-terminus.</text>
</comment>